<feature type="chain" id="PRO_0000402686" description="Ureidoacrylate amidohydrolase RutB">
    <location>
        <begin position="1"/>
        <end position="231"/>
    </location>
</feature>
<feature type="active site" description="Proton acceptor" evidence="1">
    <location>
        <position position="25"/>
    </location>
</feature>
<feature type="active site" evidence="1">
    <location>
        <position position="134"/>
    </location>
</feature>
<feature type="active site" description="Nucleophile" evidence="1">
    <location>
        <position position="167"/>
    </location>
</feature>
<gene>
    <name evidence="1" type="primary">rutB</name>
    <name type="ordered locus">EcHS_A1126</name>
</gene>
<sequence length="231" mass="25360">MMTTLTARPEAITFDPQQSALIVVDMQNAYATPGGYLDLAGFDVSTTRPVIANIQTAVTAARAAGMLIIWFQNGWDEQYVEAGGPGSPNFHKSNALKTMRKQPQLQGKLLAKGSWDYQLVDELVPQPGDIVLPKPRYSGFFNTPLDSILRSRGIRHLVFTGIATNVCVESTLRDGFFLEYFGVVLEDATHQAGPEFAQKAALFNIETFFGWVSDVETFCDALSPTSFARIA</sequence>
<organism>
    <name type="scientific">Escherichia coli O9:H4 (strain HS)</name>
    <dbReference type="NCBI Taxonomy" id="331112"/>
    <lineage>
        <taxon>Bacteria</taxon>
        <taxon>Pseudomonadati</taxon>
        <taxon>Pseudomonadota</taxon>
        <taxon>Gammaproteobacteria</taxon>
        <taxon>Enterobacterales</taxon>
        <taxon>Enterobacteriaceae</taxon>
        <taxon>Escherichia</taxon>
    </lineage>
</organism>
<comment type="function">
    <text evidence="1">Hydrolyzes ureidoacrylate to form aminoacrylate and carbamate. The carbamate hydrolyzes spontaneously, thereby releasing one of the nitrogen atoms of the pyrimidine ring as ammonia and one of its carbon atoms as CO2.</text>
</comment>
<comment type="catalytic activity">
    <reaction evidence="1">
        <text>(Z)-3-ureidoacrylate + H2O + H(+) = (Z)-3-aminoacrylate + NH4(+) + CO2</text>
        <dbReference type="Rhea" id="RHEA:42624"/>
        <dbReference type="ChEBI" id="CHEBI:15377"/>
        <dbReference type="ChEBI" id="CHEBI:15378"/>
        <dbReference type="ChEBI" id="CHEBI:16526"/>
        <dbReference type="ChEBI" id="CHEBI:28938"/>
        <dbReference type="ChEBI" id="CHEBI:59891"/>
        <dbReference type="ChEBI" id="CHEBI:59894"/>
        <dbReference type="EC" id="3.5.1.110"/>
    </reaction>
</comment>
<comment type="catalytic activity">
    <reaction evidence="1">
        <text>(Z)-3-ureidoacrylate + H2O = (Z)-3-aminoacrylate + carbamate + H(+)</text>
        <dbReference type="Rhea" id="RHEA:31603"/>
        <dbReference type="ChEBI" id="CHEBI:13941"/>
        <dbReference type="ChEBI" id="CHEBI:15377"/>
        <dbReference type="ChEBI" id="CHEBI:15378"/>
        <dbReference type="ChEBI" id="CHEBI:59891"/>
        <dbReference type="ChEBI" id="CHEBI:59894"/>
    </reaction>
</comment>
<comment type="catalytic activity">
    <reaction evidence="1">
        <text>(Z)-2-methylureidoacrylate + H2O + H(+) = (Z)-2-methylaminoacrylate + NH4(+) + CO2</text>
        <dbReference type="Rhea" id="RHEA:42620"/>
        <dbReference type="ChEBI" id="CHEBI:15377"/>
        <dbReference type="ChEBI" id="CHEBI:15378"/>
        <dbReference type="ChEBI" id="CHEBI:16526"/>
        <dbReference type="ChEBI" id="CHEBI:28938"/>
        <dbReference type="ChEBI" id="CHEBI:143783"/>
        <dbReference type="ChEBI" id="CHEBI:145735"/>
        <dbReference type="EC" id="3.5.1.110"/>
    </reaction>
</comment>
<comment type="induction">
    <text evidence="1">Up-regulated by the nitrogen regulatory protein C (NtrC also called GlnG) and repressed by RutR.</text>
</comment>
<comment type="similarity">
    <text evidence="1">Belongs to the isochorismatase family. RutB subfamily.</text>
</comment>
<keyword id="KW-0378">Hydrolase</keyword>
<proteinExistence type="inferred from homology"/>
<dbReference type="EC" id="3.5.1.110" evidence="1"/>
<dbReference type="EMBL" id="CP000802">
    <property type="protein sequence ID" value="ABV05470.1"/>
    <property type="molecule type" value="Genomic_DNA"/>
</dbReference>
<dbReference type="SMR" id="A7ZYW6"/>
<dbReference type="KEGG" id="ecx:EcHS_A1126"/>
<dbReference type="HOGENOM" id="CLU_068979_8_0_6"/>
<dbReference type="GO" id="GO:0016811">
    <property type="term" value="F:hydrolase activity, acting on carbon-nitrogen (but not peptide) bonds, in linear amides"/>
    <property type="evidence" value="ECO:0007669"/>
    <property type="project" value="UniProtKB-UniRule"/>
</dbReference>
<dbReference type="GO" id="GO:0019740">
    <property type="term" value="P:nitrogen utilization"/>
    <property type="evidence" value="ECO:0007669"/>
    <property type="project" value="UniProtKB-UniRule"/>
</dbReference>
<dbReference type="GO" id="GO:0006212">
    <property type="term" value="P:uracil catabolic process"/>
    <property type="evidence" value="ECO:0007669"/>
    <property type="project" value="UniProtKB-UniRule"/>
</dbReference>
<dbReference type="CDD" id="cd00431">
    <property type="entry name" value="cysteine_hydrolases"/>
    <property type="match status" value="1"/>
</dbReference>
<dbReference type="FunFam" id="3.40.50.850:FF:000004">
    <property type="entry name" value="Peroxyureidoacrylate/ureidoacrylate amidohydrolase RutB"/>
    <property type="match status" value="1"/>
</dbReference>
<dbReference type="Gene3D" id="3.40.50.850">
    <property type="entry name" value="Isochorismatase-like"/>
    <property type="match status" value="1"/>
</dbReference>
<dbReference type="HAMAP" id="MF_00830">
    <property type="entry name" value="RutB"/>
    <property type="match status" value="1"/>
</dbReference>
<dbReference type="InterPro" id="IPR000868">
    <property type="entry name" value="Isochorismatase-like_dom"/>
</dbReference>
<dbReference type="InterPro" id="IPR050272">
    <property type="entry name" value="Isochorismatase-like_hydrls"/>
</dbReference>
<dbReference type="InterPro" id="IPR036380">
    <property type="entry name" value="Isochorismatase-like_sf"/>
</dbReference>
<dbReference type="InterPro" id="IPR019916">
    <property type="entry name" value="RutB"/>
</dbReference>
<dbReference type="NCBIfam" id="TIGR03614">
    <property type="entry name" value="RutB"/>
    <property type="match status" value="1"/>
</dbReference>
<dbReference type="PANTHER" id="PTHR43540:SF6">
    <property type="entry name" value="ISOCHORISMATASE-LIKE DOMAIN-CONTAINING PROTEIN"/>
    <property type="match status" value="1"/>
</dbReference>
<dbReference type="PANTHER" id="PTHR43540">
    <property type="entry name" value="PEROXYUREIDOACRYLATE/UREIDOACRYLATE AMIDOHYDROLASE-RELATED"/>
    <property type="match status" value="1"/>
</dbReference>
<dbReference type="Pfam" id="PF00857">
    <property type="entry name" value="Isochorismatase"/>
    <property type="match status" value="1"/>
</dbReference>
<dbReference type="SUPFAM" id="SSF52499">
    <property type="entry name" value="Isochorismatase-like hydrolases"/>
    <property type="match status" value="1"/>
</dbReference>
<protein>
    <recommendedName>
        <fullName evidence="1">Ureidoacrylate amidohydrolase RutB</fullName>
        <ecNumber evidence="1">3.5.1.110</ecNumber>
    </recommendedName>
</protein>
<evidence type="ECO:0000255" key="1">
    <source>
        <dbReference type="HAMAP-Rule" id="MF_00830"/>
    </source>
</evidence>
<reference key="1">
    <citation type="journal article" date="2008" name="J. Bacteriol.">
        <title>The pangenome structure of Escherichia coli: comparative genomic analysis of E. coli commensal and pathogenic isolates.</title>
        <authorList>
            <person name="Rasko D.A."/>
            <person name="Rosovitz M.J."/>
            <person name="Myers G.S.A."/>
            <person name="Mongodin E.F."/>
            <person name="Fricke W.F."/>
            <person name="Gajer P."/>
            <person name="Crabtree J."/>
            <person name="Sebaihia M."/>
            <person name="Thomson N.R."/>
            <person name="Chaudhuri R."/>
            <person name="Henderson I.R."/>
            <person name="Sperandio V."/>
            <person name="Ravel J."/>
        </authorList>
    </citation>
    <scope>NUCLEOTIDE SEQUENCE [LARGE SCALE GENOMIC DNA]</scope>
    <source>
        <strain>HS</strain>
    </source>
</reference>
<accession>A7ZYW6</accession>
<name>RUTB_ECOHS</name>